<name>CWC22_MOUSE</name>
<dbReference type="EMBL" id="AK045589">
    <property type="protein sequence ID" value="BAC32427.1"/>
    <property type="molecule type" value="mRNA"/>
</dbReference>
<dbReference type="EMBL" id="AK132001">
    <property type="protein sequence ID" value="BAE20931.1"/>
    <property type="molecule type" value="mRNA"/>
</dbReference>
<dbReference type="EMBL" id="AK077961">
    <property type="protein sequence ID" value="BAC37085.1"/>
    <property type="molecule type" value="mRNA"/>
</dbReference>
<dbReference type="EMBL" id="AK149528">
    <property type="protein sequence ID" value="BAE28941.1"/>
    <property type="molecule type" value="mRNA"/>
</dbReference>
<dbReference type="EMBL" id="BC003993">
    <property type="protein sequence ID" value="AAH03993.1"/>
    <property type="status" value="ALT_INIT"/>
    <property type="molecule type" value="mRNA"/>
</dbReference>
<dbReference type="CCDS" id="CCDS16165.1">
    <molecule id="Q8C5N3-1"/>
</dbReference>
<dbReference type="CCDS" id="CCDS57178.1">
    <molecule id="Q8C5N3-2"/>
</dbReference>
<dbReference type="RefSeq" id="NP_001277669.1">
    <property type="nucleotide sequence ID" value="NM_001290740.1"/>
</dbReference>
<dbReference type="RefSeq" id="NP_001349587.1">
    <molecule id="Q8C5N3-1"/>
    <property type="nucleotide sequence ID" value="NM_001362658.3"/>
</dbReference>
<dbReference type="RefSeq" id="NP_001349588.1">
    <molecule id="Q8C5N3-2"/>
    <property type="nucleotide sequence ID" value="NM_001362659.3"/>
</dbReference>
<dbReference type="RefSeq" id="NP_085037.2">
    <molecule id="Q8C5N3-1"/>
    <property type="nucleotide sequence ID" value="NM_030560.5"/>
</dbReference>
<dbReference type="RefSeq" id="NP_766255.1">
    <molecule id="Q8C5N3-2"/>
    <property type="nucleotide sequence ID" value="NM_172667.4"/>
</dbReference>
<dbReference type="RefSeq" id="XP_006500499.1">
    <property type="nucleotide sequence ID" value="XM_006500436.3"/>
</dbReference>
<dbReference type="RefSeq" id="XP_011238158.1">
    <property type="nucleotide sequence ID" value="XM_011239856.1"/>
</dbReference>
<dbReference type="RefSeq" id="XP_030108117.1">
    <molecule id="Q8C5N3-1"/>
    <property type="nucleotide sequence ID" value="XM_030252257.2"/>
</dbReference>
<dbReference type="RefSeq" id="XP_036018623.1">
    <molecule id="Q8C5N3-2"/>
    <property type="nucleotide sequence ID" value="XM_036162730.1"/>
</dbReference>
<dbReference type="SMR" id="Q8C5N3"/>
<dbReference type="BioGRID" id="219805">
    <property type="interactions" value="37"/>
</dbReference>
<dbReference type="FunCoup" id="Q8C5N3">
    <property type="interactions" value="3841"/>
</dbReference>
<dbReference type="STRING" id="10090.ENSMUSP00000064947"/>
<dbReference type="GlyGen" id="Q8C5N3">
    <property type="glycosylation" value="1 site, 1 O-linked glycan (1 site)"/>
</dbReference>
<dbReference type="iPTMnet" id="Q8C5N3"/>
<dbReference type="PhosphoSitePlus" id="Q8C5N3"/>
<dbReference type="jPOST" id="Q8C5N3"/>
<dbReference type="PaxDb" id="10090-ENSMUSP00000064947"/>
<dbReference type="ProteomicsDB" id="279236">
    <molecule id="Q8C5N3-1"/>
</dbReference>
<dbReference type="ProteomicsDB" id="279237">
    <molecule id="Q8C5N3-2"/>
</dbReference>
<dbReference type="Pumba" id="Q8C5N3"/>
<dbReference type="DNASU" id="80744"/>
<dbReference type="Ensembl" id="ENSMUST00000065889.10">
    <molecule id="Q8C5N3-1"/>
    <property type="protein sequence ID" value="ENSMUSP00000064947.4"/>
    <property type="gene ID" value="ENSMUSG00000027014.15"/>
</dbReference>
<dbReference type="Ensembl" id="ENSMUST00000111818.8">
    <molecule id="Q8C5N3-2"/>
    <property type="protein sequence ID" value="ENSMUSP00000107449.2"/>
    <property type="gene ID" value="ENSMUSG00000027014.15"/>
</dbReference>
<dbReference type="Ensembl" id="ENSMUST00000111821.9">
    <molecule id="Q8C5N3-1"/>
    <property type="protein sequence ID" value="ENSMUSP00000107452.3"/>
    <property type="gene ID" value="ENSMUSG00000027014.15"/>
</dbReference>
<dbReference type="GeneID" id="80744"/>
<dbReference type="KEGG" id="mmu:80744"/>
<dbReference type="UCSC" id="uc008kgc.3">
    <molecule id="Q8C5N3-1"/>
    <property type="organism name" value="mouse"/>
</dbReference>
<dbReference type="UCSC" id="uc008kgd.3">
    <molecule id="Q8C5N3-2"/>
    <property type="organism name" value="mouse"/>
</dbReference>
<dbReference type="AGR" id="MGI:2136773"/>
<dbReference type="CTD" id="57703"/>
<dbReference type="MGI" id="MGI:2136773">
    <property type="gene designation" value="Cwc22"/>
</dbReference>
<dbReference type="VEuPathDB" id="HostDB:ENSMUSG00000027014"/>
<dbReference type="eggNOG" id="KOG2140">
    <property type="taxonomic scope" value="Eukaryota"/>
</dbReference>
<dbReference type="GeneTree" id="ENSGT00940000153458"/>
<dbReference type="HOGENOM" id="CLU_006308_1_0_1"/>
<dbReference type="InParanoid" id="Q8C5N3"/>
<dbReference type="OMA" id="RYTEREW"/>
<dbReference type="OrthoDB" id="1924287at2759"/>
<dbReference type="PhylomeDB" id="Q8C5N3"/>
<dbReference type="TreeFam" id="TF300510"/>
<dbReference type="Reactome" id="R-MMU-72163">
    <property type="pathway name" value="mRNA Splicing - Major Pathway"/>
</dbReference>
<dbReference type="BioGRID-ORCS" id="80744">
    <property type="hits" value="13 hits in 77 CRISPR screens"/>
</dbReference>
<dbReference type="ChiTaRS" id="Cwc22">
    <property type="organism name" value="mouse"/>
</dbReference>
<dbReference type="PRO" id="PR:Q8C5N3"/>
<dbReference type="Proteomes" id="UP000000589">
    <property type="component" value="Chromosome 2"/>
</dbReference>
<dbReference type="RNAct" id="Q8C5N3">
    <property type="molecule type" value="protein"/>
</dbReference>
<dbReference type="Bgee" id="ENSMUSG00000027014">
    <property type="expression patterns" value="Expressed in epiblast (generic) and 133 other cell types or tissues"/>
</dbReference>
<dbReference type="ExpressionAtlas" id="Q8C5N3">
    <property type="expression patterns" value="baseline and differential"/>
</dbReference>
<dbReference type="GO" id="GO:0016607">
    <property type="term" value="C:nuclear speck"/>
    <property type="evidence" value="ECO:0007669"/>
    <property type="project" value="UniProtKB-SubCell"/>
</dbReference>
<dbReference type="GO" id="GO:0005634">
    <property type="term" value="C:nucleus"/>
    <property type="evidence" value="ECO:0000250"/>
    <property type="project" value="UniProtKB"/>
</dbReference>
<dbReference type="GO" id="GO:0005681">
    <property type="term" value="C:spliceosomal complex"/>
    <property type="evidence" value="ECO:0000250"/>
    <property type="project" value="UniProtKB"/>
</dbReference>
<dbReference type="GO" id="GO:0071006">
    <property type="term" value="C:U2-type catalytic step 1 spliceosome"/>
    <property type="evidence" value="ECO:0000250"/>
    <property type="project" value="UniProtKB"/>
</dbReference>
<dbReference type="GO" id="GO:0071007">
    <property type="term" value="C:U2-type catalytic step 2 spliceosome"/>
    <property type="evidence" value="ECO:0000250"/>
    <property type="project" value="UniProtKB"/>
</dbReference>
<dbReference type="GO" id="GO:0071005">
    <property type="term" value="C:U2-type precatalytic spliceosome"/>
    <property type="evidence" value="ECO:0000250"/>
    <property type="project" value="UniProtKB"/>
</dbReference>
<dbReference type="GO" id="GO:0003723">
    <property type="term" value="F:RNA binding"/>
    <property type="evidence" value="ECO:0000250"/>
    <property type="project" value="UniProtKB"/>
</dbReference>
<dbReference type="GO" id="GO:0000398">
    <property type="term" value="P:mRNA splicing, via spliceosome"/>
    <property type="evidence" value="ECO:0000250"/>
    <property type="project" value="UniProtKB"/>
</dbReference>
<dbReference type="FunFam" id="1.25.40.180:FF:000004">
    <property type="entry name" value="pre-mRNA-splicing factor CWC22 homolog"/>
    <property type="match status" value="1"/>
</dbReference>
<dbReference type="Gene3D" id="1.25.40.180">
    <property type="match status" value="1"/>
</dbReference>
<dbReference type="InterPro" id="IPR016024">
    <property type="entry name" value="ARM-type_fold"/>
</dbReference>
<dbReference type="InterPro" id="IPR050781">
    <property type="entry name" value="CWC22_splicing_factor"/>
</dbReference>
<dbReference type="InterPro" id="IPR003891">
    <property type="entry name" value="Initiation_fac_eIF4g_MI"/>
</dbReference>
<dbReference type="InterPro" id="IPR003890">
    <property type="entry name" value="MIF4G-like_typ-3"/>
</dbReference>
<dbReference type="PANTHER" id="PTHR18034">
    <property type="entry name" value="CELL CYCLE CONTROL PROTEIN CWF22-RELATED"/>
    <property type="match status" value="1"/>
</dbReference>
<dbReference type="PANTHER" id="PTHR18034:SF3">
    <property type="entry name" value="PRE-MRNA-SPLICING FACTOR CWC22 HOMOLOG"/>
    <property type="match status" value="1"/>
</dbReference>
<dbReference type="Pfam" id="PF02847">
    <property type="entry name" value="MA3"/>
    <property type="match status" value="1"/>
</dbReference>
<dbReference type="Pfam" id="PF02854">
    <property type="entry name" value="MIF4G"/>
    <property type="match status" value="1"/>
</dbReference>
<dbReference type="SMART" id="SM00544">
    <property type="entry name" value="MA3"/>
    <property type="match status" value="1"/>
</dbReference>
<dbReference type="SMART" id="SM00543">
    <property type="entry name" value="MIF4G"/>
    <property type="match status" value="1"/>
</dbReference>
<dbReference type="SUPFAM" id="SSF48371">
    <property type="entry name" value="ARM repeat"/>
    <property type="match status" value="1"/>
</dbReference>
<dbReference type="PROSITE" id="PS51366">
    <property type="entry name" value="MI"/>
    <property type="match status" value="1"/>
</dbReference>
<gene>
    <name type="primary">Cwc22</name>
    <name type="synonym">Ncm</name>
</gene>
<proteinExistence type="evidence at protein level"/>
<accession>Q8C5N3</accession>
<accession>Q3UEH0</accession>
<accession>Q3V267</accession>
<accession>Q8BR58</accession>
<accession>Q99KV6</accession>
<comment type="function">
    <text evidence="1">Required for pre-mRNA splicing as component of the spliceosome. As a component of the minor spliceosome, involved in the splicing of U12-type introns in pre-mRNAs (By similarity). Promotes exon-junction complex (EJC) assembly. Hinders EIF4A3 from non-specifically binding RNA and escorts it to the splicing machinery to promote EJC assembly on mature mRNAs. Through its role in EJC assembly, required for nonsense-mediated mRNA decay.</text>
</comment>
<comment type="subunit">
    <text evidence="1">Component of the pre-catalytic spliceosome B and the catalytic spliceosome C complexes. Component of the minor spliceosome, which splices U12-type introns (By similarity). Interacts with EIF4A3 and PRPF19 in an RNA-independent manner. Direct interaction with EIF4A3 is mediated by the MIF4G domain. Full interaction with EIF4A3 occurs only when EIF4A3 is not part of the EJC and prevents EIF4A3 binding to RNA.</text>
</comment>
<comment type="subcellular location">
    <subcellularLocation>
        <location evidence="1">Nucleus</location>
    </subcellularLocation>
    <subcellularLocation>
        <location evidence="1">Nucleus speckle</location>
    </subcellularLocation>
    <text evidence="1">Concentrates around speckles, which are sites of pre-mRNA synthesis and processing, where it colocalizes with EJC core proteins.</text>
</comment>
<comment type="alternative products">
    <event type="alternative splicing"/>
    <isoform>
        <id>Q8C5N3-1</id>
        <name>1</name>
        <sequence type="displayed"/>
    </isoform>
    <isoform>
        <id>Q8C5N3-2</id>
        <name>2</name>
        <sequence type="described" ref="VSP_027905"/>
    </isoform>
</comment>
<comment type="similarity">
    <text evidence="6">Belongs to the CWC22 family.</text>
</comment>
<comment type="sequence caution" evidence="6">
    <conflict type="erroneous initiation">
        <sequence resource="EMBL-CDS" id="AAH03993"/>
    </conflict>
</comment>
<keyword id="KW-0025">Alternative splicing</keyword>
<keyword id="KW-0507">mRNA processing</keyword>
<keyword id="KW-0508">mRNA splicing</keyword>
<keyword id="KW-0539">Nucleus</keyword>
<keyword id="KW-0597">Phosphoprotein</keyword>
<keyword id="KW-1185">Reference proteome</keyword>
<keyword id="KW-0747">Spliceosome</keyword>
<organism>
    <name type="scientific">Mus musculus</name>
    <name type="common">Mouse</name>
    <dbReference type="NCBI Taxonomy" id="10090"/>
    <lineage>
        <taxon>Eukaryota</taxon>
        <taxon>Metazoa</taxon>
        <taxon>Chordata</taxon>
        <taxon>Craniata</taxon>
        <taxon>Vertebrata</taxon>
        <taxon>Euteleostomi</taxon>
        <taxon>Mammalia</taxon>
        <taxon>Eutheria</taxon>
        <taxon>Euarchontoglires</taxon>
        <taxon>Glires</taxon>
        <taxon>Rodentia</taxon>
        <taxon>Myomorpha</taxon>
        <taxon>Muroidea</taxon>
        <taxon>Muridae</taxon>
        <taxon>Murinae</taxon>
        <taxon>Mus</taxon>
        <taxon>Mus</taxon>
    </lineage>
</organism>
<evidence type="ECO:0000250" key="1">
    <source>
        <dbReference type="UniProtKB" id="Q9HCG8"/>
    </source>
</evidence>
<evidence type="ECO:0000255" key="2">
    <source>
        <dbReference type="PROSITE-ProRule" id="PRU00698"/>
    </source>
</evidence>
<evidence type="ECO:0000256" key="3">
    <source>
        <dbReference type="SAM" id="MobiDB-lite"/>
    </source>
</evidence>
<evidence type="ECO:0000303" key="4">
    <source>
    </source>
</evidence>
<evidence type="ECO:0000303" key="5">
    <source>
    </source>
</evidence>
<evidence type="ECO:0000305" key="6"/>
<evidence type="ECO:0007744" key="7">
    <source>
    </source>
</evidence>
<evidence type="ECO:0007744" key="8">
    <source>
    </source>
</evidence>
<protein>
    <recommendedName>
        <fullName>Pre-mRNA-splicing factor CWC22 homolog</fullName>
    </recommendedName>
    <alternativeName>
        <fullName>Nucampholin homolog</fullName>
    </alternativeName>
</protein>
<feature type="chain" id="PRO_0000302006" description="Pre-mRNA-splicing factor CWC22 homolog">
    <location>
        <begin position="1"/>
        <end position="908"/>
    </location>
</feature>
<feature type="domain" description="MIF4G" evidence="2">
    <location>
        <begin position="161"/>
        <end position="344"/>
    </location>
</feature>
<feature type="domain" description="MI" evidence="2">
    <location>
        <begin position="453"/>
        <end position="569"/>
    </location>
</feature>
<feature type="region of interest" description="Disordered" evidence="3">
    <location>
        <begin position="1"/>
        <end position="127"/>
    </location>
</feature>
<feature type="region of interest" description="Disordered" evidence="3">
    <location>
        <begin position="403"/>
        <end position="442"/>
    </location>
</feature>
<feature type="region of interest" description="Disordered" evidence="3">
    <location>
        <begin position="652"/>
        <end position="908"/>
    </location>
</feature>
<feature type="compositionally biased region" description="Basic and acidic residues" evidence="3">
    <location>
        <begin position="14"/>
        <end position="84"/>
    </location>
</feature>
<feature type="compositionally biased region" description="Basic and acidic residues" evidence="3">
    <location>
        <begin position="111"/>
        <end position="120"/>
    </location>
</feature>
<feature type="compositionally biased region" description="Acidic residues" evidence="3">
    <location>
        <begin position="420"/>
        <end position="436"/>
    </location>
</feature>
<feature type="compositionally biased region" description="Low complexity" evidence="3">
    <location>
        <begin position="669"/>
        <end position="680"/>
    </location>
</feature>
<feature type="compositionally biased region" description="Low complexity" evidence="3">
    <location>
        <begin position="688"/>
        <end position="712"/>
    </location>
</feature>
<feature type="compositionally biased region" description="Basic residues" evidence="3">
    <location>
        <begin position="720"/>
        <end position="729"/>
    </location>
</feature>
<feature type="compositionally biased region" description="Basic and acidic residues" evidence="3">
    <location>
        <begin position="730"/>
        <end position="798"/>
    </location>
</feature>
<feature type="compositionally biased region" description="Basic and acidic residues" evidence="3">
    <location>
        <begin position="807"/>
        <end position="818"/>
    </location>
</feature>
<feature type="compositionally biased region" description="Basic and acidic residues" evidence="3">
    <location>
        <begin position="826"/>
        <end position="847"/>
    </location>
</feature>
<feature type="compositionally biased region" description="Basic residues" evidence="3">
    <location>
        <begin position="848"/>
        <end position="863"/>
    </location>
</feature>
<feature type="compositionally biased region" description="Basic and acidic residues" evidence="3">
    <location>
        <begin position="864"/>
        <end position="908"/>
    </location>
</feature>
<feature type="modified residue" description="Phosphoserine" evidence="1">
    <location>
        <position position="38"/>
    </location>
</feature>
<feature type="modified residue" description="Phosphoserine" evidence="1">
    <location>
        <position position="60"/>
    </location>
</feature>
<feature type="modified residue" description="Phosphoserine" evidence="7 8">
    <location>
        <position position="106"/>
    </location>
</feature>
<feature type="modified residue" description="Phosphoserine" evidence="1">
    <location>
        <position position="829"/>
    </location>
</feature>
<feature type="splice variant" id="VSP_027905" description="In isoform 2." evidence="4 5">
    <location>
        <begin position="713"/>
        <end position="718"/>
    </location>
</feature>
<feature type="sequence conflict" description="In Ref. 2; AAH03993." evidence="6" ref="2">
    <original>K</original>
    <variation>KQ</variation>
    <location>
        <position position="9"/>
    </location>
</feature>
<feature type="sequence conflict" description="In Ref. 2; AAH03993." evidence="6" ref="2">
    <original>L</original>
    <variation>P</variation>
    <location>
        <position position="493"/>
    </location>
</feature>
<feature type="sequence conflict" description="In Ref. 2; AAH03993." evidence="6" ref="2">
    <original>T</original>
    <variation>I</variation>
    <location>
        <position position="540"/>
    </location>
</feature>
<feature type="sequence conflict" description="In Ref. 2; AAH03993." evidence="6" ref="2">
    <original>S</original>
    <variation>SS</variation>
    <location>
        <position position="706"/>
    </location>
</feature>
<feature type="sequence conflict" description="In Ref. 2; AAH03993." evidence="6" ref="2">
    <original>R</original>
    <variation>Q</variation>
    <location>
        <position position="749"/>
    </location>
</feature>
<feature type="sequence conflict" description="In Ref. 1; BAE20931." evidence="6" ref="1">
    <original>R</original>
    <variation>K</variation>
    <location>
        <position position="847"/>
    </location>
</feature>
<feature type="sequence conflict" description="In Ref. 2; AAH03993." evidence="6" ref="2">
    <original>S</original>
    <variation>G</variation>
    <location>
        <position position="874"/>
    </location>
</feature>
<feature type="sequence conflict" description="In Ref. 1; BAE28941." evidence="6" ref="1">
    <original>Q</original>
    <variation>R</variation>
    <location>
        <position position="896"/>
    </location>
</feature>
<feature type="sequence conflict" description="In Ref. 1; BAC32427." evidence="6" ref="1">
    <original>R</original>
    <variation>G</variation>
    <location>
        <position position="898"/>
    </location>
</feature>
<reference key="1">
    <citation type="journal article" date="2005" name="Science">
        <title>The transcriptional landscape of the mammalian genome.</title>
        <authorList>
            <person name="Carninci P."/>
            <person name="Kasukawa T."/>
            <person name="Katayama S."/>
            <person name="Gough J."/>
            <person name="Frith M.C."/>
            <person name="Maeda N."/>
            <person name="Oyama R."/>
            <person name="Ravasi T."/>
            <person name="Lenhard B."/>
            <person name="Wells C."/>
            <person name="Kodzius R."/>
            <person name="Shimokawa K."/>
            <person name="Bajic V.B."/>
            <person name="Brenner S.E."/>
            <person name="Batalov S."/>
            <person name="Forrest A.R."/>
            <person name="Zavolan M."/>
            <person name="Davis M.J."/>
            <person name="Wilming L.G."/>
            <person name="Aidinis V."/>
            <person name="Allen J.E."/>
            <person name="Ambesi-Impiombato A."/>
            <person name="Apweiler R."/>
            <person name="Aturaliya R.N."/>
            <person name="Bailey T.L."/>
            <person name="Bansal M."/>
            <person name="Baxter L."/>
            <person name="Beisel K.W."/>
            <person name="Bersano T."/>
            <person name="Bono H."/>
            <person name="Chalk A.M."/>
            <person name="Chiu K.P."/>
            <person name="Choudhary V."/>
            <person name="Christoffels A."/>
            <person name="Clutterbuck D.R."/>
            <person name="Crowe M.L."/>
            <person name="Dalla E."/>
            <person name="Dalrymple B.P."/>
            <person name="de Bono B."/>
            <person name="Della Gatta G."/>
            <person name="di Bernardo D."/>
            <person name="Down T."/>
            <person name="Engstrom P."/>
            <person name="Fagiolini M."/>
            <person name="Faulkner G."/>
            <person name="Fletcher C.F."/>
            <person name="Fukushima T."/>
            <person name="Furuno M."/>
            <person name="Futaki S."/>
            <person name="Gariboldi M."/>
            <person name="Georgii-Hemming P."/>
            <person name="Gingeras T.R."/>
            <person name="Gojobori T."/>
            <person name="Green R.E."/>
            <person name="Gustincich S."/>
            <person name="Harbers M."/>
            <person name="Hayashi Y."/>
            <person name="Hensch T.K."/>
            <person name="Hirokawa N."/>
            <person name="Hill D."/>
            <person name="Huminiecki L."/>
            <person name="Iacono M."/>
            <person name="Ikeo K."/>
            <person name="Iwama A."/>
            <person name="Ishikawa T."/>
            <person name="Jakt M."/>
            <person name="Kanapin A."/>
            <person name="Katoh M."/>
            <person name="Kawasawa Y."/>
            <person name="Kelso J."/>
            <person name="Kitamura H."/>
            <person name="Kitano H."/>
            <person name="Kollias G."/>
            <person name="Krishnan S.P."/>
            <person name="Kruger A."/>
            <person name="Kummerfeld S.K."/>
            <person name="Kurochkin I.V."/>
            <person name="Lareau L.F."/>
            <person name="Lazarevic D."/>
            <person name="Lipovich L."/>
            <person name="Liu J."/>
            <person name="Liuni S."/>
            <person name="McWilliam S."/>
            <person name="Madan Babu M."/>
            <person name="Madera M."/>
            <person name="Marchionni L."/>
            <person name="Matsuda H."/>
            <person name="Matsuzawa S."/>
            <person name="Miki H."/>
            <person name="Mignone F."/>
            <person name="Miyake S."/>
            <person name="Morris K."/>
            <person name="Mottagui-Tabar S."/>
            <person name="Mulder N."/>
            <person name="Nakano N."/>
            <person name="Nakauchi H."/>
            <person name="Ng P."/>
            <person name="Nilsson R."/>
            <person name="Nishiguchi S."/>
            <person name="Nishikawa S."/>
            <person name="Nori F."/>
            <person name="Ohara O."/>
            <person name="Okazaki Y."/>
            <person name="Orlando V."/>
            <person name="Pang K.C."/>
            <person name="Pavan W.J."/>
            <person name="Pavesi G."/>
            <person name="Pesole G."/>
            <person name="Petrovsky N."/>
            <person name="Piazza S."/>
            <person name="Reed J."/>
            <person name="Reid J.F."/>
            <person name="Ring B.Z."/>
            <person name="Ringwald M."/>
            <person name="Rost B."/>
            <person name="Ruan Y."/>
            <person name="Salzberg S.L."/>
            <person name="Sandelin A."/>
            <person name="Schneider C."/>
            <person name="Schoenbach C."/>
            <person name="Sekiguchi K."/>
            <person name="Semple C.A."/>
            <person name="Seno S."/>
            <person name="Sessa L."/>
            <person name="Sheng Y."/>
            <person name="Shibata Y."/>
            <person name="Shimada H."/>
            <person name="Shimada K."/>
            <person name="Silva D."/>
            <person name="Sinclair B."/>
            <person name="Sperling S."/>
            <person name="Stupka E."/>
            <person name="Sugiura K."/>
            <person name="Sultana R."/>
            <person name="Takenaka Y."/>
            <person name="Taki K."/>
            <person name="Tammoja K."/>
            <person name="Tan S.L."/>
            <person name="Tang S."/>
            <person name="Taylor M.S."/>
            <person name="Tegner J."/>
            <person name="Teichmann S.A."/>
            <person name="Ueda H.R."/>
            <person name="van Nimwegen E."/>
            <person name="Verardo R."/>
            <person name="Wei C.L."/>
            <person name="Yagi K."/>
            <person name="Yamanishi H."/>
            <person name="Zabarovsky E."/>
            <person name="Zhu S."/>
            <person name="Zimmer A."/>
            <person name="Hide W."/>
            <person name="Bult C."/>
            <person name="Grimmond S.M."/>
            <person name="Teasdale R.D."/>
            <person name="Liu E.T."/>
            <person name="Brusic V."/>
            <person name="Quackenbush J."/>
            <person name="Wahlestedt C."/>
            <person name="Mattick J.S."/>
            <person name="Hume D.A."/>
            <person name="Kai C."/>
            <person name="Sasaki D."/>
            <person name="Tomaru Y."/>
            <person name="Fukuda S."/>
            <person name="Kanamori-Katayama M."/>
            <person name="Suzuki M."/>
            <person name="Aoki J."/>
            <person name="Arakawa T."/>
            <person name="Iida J."/>
            <person name="Imamura K."/>
            <person name="Itoh M."/>
            <person name="Kato T."/>
            <person name="Kawaji H."/>
            <person name="Kawagashira N."/>
            <person name="Kawashima T."/>
            <person name="Kojima M."/>
            <person name="Kondo S."/>
            <person name="Konno H."/>
            <person name="Nakano K."/>
            <person name="Ninomiya N."/>
            <person name="Nishio T."/>
            <person name="Okada M."/>
            <person name="Plessy C."/>
            <person name="Shibata K."/>
            <person name="Shiraki T."/>
            <person name="Suzuki S."/>
            <person name="Tagami M."/>
            <person name="Waki K."/>
            <person name="Watahiki A."/>
            <person name="Okamura-Oho Y."/>
            <person name="Suzuki H."/>
            <person name="Kawai J."/>
            <person name="Hayashizaki Y."/>
        </authorList>
    </citation>
    <scope>NUCLEOTIDE SEQUENCE [LARGE SCALE MRNA] (ISOFORMS 1 AND 2)</scope>
    <source>
        <strain>C57BL/6J</strain>
        <tissue>Corpora quadrigemina</tissue>
        <tissue>Liver</tissue>
        <tissue>Testis</tissue>
    </source>
</reference>
<reference key="2">
    <citation type="journal article" date="2004" name="Genome Res.">
        <title>The status, quality, and expansion of the NIH full-length cDNA project: the Mammalian Gene Collection (MGC).</title>
        <authorList>
            <consortium name="The MGC Project Team"/>
        </authorList>
    </citation>
    <scope>NUCLEOTIDE SEQUENCE [LARGE SCALE MRNA] (ISOFORM 2)</scope>
    <source>
        <strain>Czech II</strain>
        <tissue>Mammary tumor</tissue>
    </source>
</reference>
<reference key="3">
    <citation type="journal article" date="2007" name="Proc. Natl. Acad. Sci. U.S.A.">
        <title>Large-scale phosphorylation analysis of mouse liver.</title>
        <authorList>
            <person name="Villen J."/>
            <person name="Beausoleil S.A."/>
            <person name="Gerber S.A."/>
            <person name="Gygi S.P."/>
        </authorList>
    </citation>
    <scope>PHOSPHORYLATION [LARGE SCALE ANALYSIS] AT SER-106</scope>
    <scope>IDENTIFICATION BY MASS SPECTROMETRY [LARGE SCALE ANALYSIS]</scope>
    <source>
        <tissue>Liver</tissue>
    </source>
</reference>
<reference key="4">
    <citation type="journal article" date="2010" name="Cell">
        <title>A tissue-specific atlas of mouse protein phosphorylation and expression.</title>
        <authorList>
            <person name="Huttlin E.L."/>
            <person name="Jedrychowski M.P."/>
            <person name="Elias J.E."/>
            <person name="Goswami T."/>
            <person name="Rad R."/>
            <person name="Beausoleil S.A."/>
            <person name="Villen J."/>
            <person name="Haas W."/>
            <person name="Sowa M.E."/>
            <person name="Gygi S.P."/>
        </authorList>
    </citation>
    <scope>PHOSPHORYLATION [LARGE SCALE ANALYSIS] AT SER-106</scope>
    <scope>IDENTIFICATION BY MASS SPECTROMETRY [LARGE SCALE ANALYSIS]</scope>
    <source>
        <tissue>Kidney</tissue>
        <tissue>Liver</tissue>
        <tissue>Spleen</tissue>
        <tissue>Testis</tissue>
    </source>
</reference>
<sequence>MKSSVAHMKSSGHNRRETHSSYRRSSSPEDRYTEQERSPRDRGYSDYSRSDYERSRRGYSYDDSMESRSRDREKRRERERDADHRKRSRKSPSPDRSPARGGGQSSPQEEPTWKKKKDELDPLLTRTGGAYIPPAKLRMMQEQITDKSSLAYQRMSWEALKKSINGLINKVNISNISIIIQELLQENIVRGRGLLSRSVLQAQSASPIFTHVYAALVAIINSKFPQIGELILKRLILNFRKGYRRNDKQLCLTASKFVAHLINQNVAHEVLCLEMLTLLLERPTDDSVEVAIGFLKECGLKLTQVSPRGINAIFERLRNILHESEIDKRVQYMIEVMFAVRKDGFKDHPVILEGLDLVEEDDQFTHMLPLEDDYNPEDVLNVFKMDPNFMENEEKYKAIKKEILDEGDSDSNTDQGAGSSEDEEEEDEEEEGEDEEGGQKVTIHDKTEINLVSFRRTIYLAIQSSLDFEECAHKLLKMEFAESQTKELCNMILDCCAQQRTYEKFFGLLAGRFCMLKKEYMESFESIFKEQYDTIHRLETNKLRNVAKMFAHLLYTDSLPWSVLECIKLSEETTTSSSRIFVKIFFQELCEYMGLPKLNARLKDETLQPFFEGLLPRDNPRNTRFAINFFTSIGLGGLTDELREHLKNTPKVIVAQKPEAEQKKPALTSSSSESSSASDSSDSESDSSESSSESSSDASDSSSSSSTQSSTSGITAHSAKGTRKKRQGKARGEEVDKLARGHQALERRREGGREDQRHQEGRTERARSERRRAQNSRDADWRDPLAKHIDDRSHENSHSRVGNGREQGSHREPEDRHGEPKKRRERRDSFSENEKQRSRNQDSDNVRRKDRSKSRERSRRHSGHKGDDARCQNSAERRWEKPGRRPEQSRESKRSQDRRREKSPTTQK</sequence>